<dbReference type="EC" id="1.97.1.12" evidence="1"/>
<dbReference type="EMBL" id="CP000239">
    <property type="protein sequence ID" value="ABD00641.1"/>
    <property type="molecule type" value="Genomic_DNA"/>
</dbReference>
<dbReference type="RefSeq" id="WP_011431314.1">
    <property type="nucleotide sequence ID" value="NC_007775.1"/>
</dbReference>
<dbReference type="SMR" id="Q2JRV0"/>
<dbReference type="STRING" id="321327.CYA_2521"/>
<dbReference type="KEGG" id="cya:CYA_2521"/>
<dbReference type="eggNOG" id="COG2885">
    <property type="taxonomic scope" value="Bacteria"/>
</dbReference>
<dbReference type="HOGENOM" id="CLU_016126_1_0_3"/>
<dbReference type="OrthoDB" id="499313at2"/>
<dbReference type="Proteomes" id="UP000008818">
    <property type="component" value="Chromosome"/>
</dbReference>
<dbReference type="GO" id="GO:0009522">
    <property type="term" value="C:photosystem I"/>
    <property type="evidence" value="ECO:0007669"/>
    <property type="project" value="UniProtKB-KW"/>
</dbReference>
<dbReference type="GO" id="GO:0031676">
    <property type="term" value="C:plasma membrane-derived thylakoid membrane"/>
    <property type="evidence" value="ECO:0007669"/>
    <property type="project" value="UniProtKB-SubCell"/>
</dbReference>
<dbReference type="GO" id="GO:0051539">
    <property type="term" value="F:4 iron, 4 sulfur cluster binding"/>
    <property type="evidence" value="ECO:0007669"/>
    <property type="project" value="UniProtKB-KW"/>
</dbReference>
<dbReference type="GO" id="GO:0016168">
    <property type="term" value="F:chlorophyll binding"/>
    <property type="evidence" value="ECO:0007669"/>
    <property type="project" value="UniProtKB-KW"/>
</dbReference>
<dbReference type="GO" id="GO:0009055">
    <property type="term" value="F:electron transfer activity"/>
    <property type="evidence" value="ECO:0007669"/>
    <property type="project" value="UniProtKB-UniRule"/>
</dbReference>
<dbReference type="GO" id="GO:0000287">
    <property type="term" value="F:magnesium ion binding"/>
    <property type="evidence" value="ECO:0007669"/>
    <property type="project" value="UniProtKB-UniRule"/>
</dbReference>
<dbReference type="GO" id="GO:0016491">
    <property type="term" value="F:oxidoreductase activity"/>
    <property type="evidence" value="ECO:0007669"/>
    <property type="project" value="UniProtKB-KW"/>
</dbReference>
<dbReference type="GO" id="GO:0015979">
    <property type="term" value="P:photosynthesis"/>
    <property type="evidence" value="ECO:0007669"/>
    <property type="project" value="UniProtKB-UniRule"/>
</dbReference>
<dbReference type="Gene3D" id="1.20.1130.10">
    <property type="entry name" value="Photosystem I PsaA/PsaB"/>
    <property type="match status" value="1"/>
</dbReference>
<dbReference type="HAMAP" id="MF_00458">
    <property type="entry name" value="PSI_PsaA"/>
    <property type="match status" value="1"/>
</dbReference>
<dbReference type="InterPro" id="IPR006243">
    <property type="entry name" value="PSI_PsaA"/>
</dbReference>
<dbReference type="InterPro" id="IPR001280">
    <property type="entry name" value="PSI_PsaA/B"/>
</dbReference>
<dbReference type="InterPro" id="IPR020586">
    <property type="entry name" value="PSI_PsaA/B_CS"/>
</dbReference>
<dbReference type="InterPro" id="IPR036408">
    <property type="entry name" value="PSI_PsaA/B_sf"/>
</dbReference>
<dbReference type="NCBIfam" id="TIGR01335">
    <property type="entry name" value="psaA"/>
    <property type="match status" value="1"/>
</dbReference>
<dbReference type="PANTHER" id="PTHR30128">
    <property type="entry name" value="OUTER MEMBRANE PROTEIN, OMPA-RELATED"/>
    <property type="match status" value="1"/>
</dbReference>
<dbReference type="PANTHER" id="PTHR30128:SF19">
    <property type="entry name" value="PHOTOSYSTEM I P700 CHLOROPHYLL A APOPROTEIN A1-RELATED"/>
    <property type="match status" value="1"/>
</dbReference>
<dbReference type="Pfam" id="PF00223">
    <property type="entry name" value="PsaA_PsaB"/>
    <property type="match status" value="1"/>
</dbReference>
<dbReference type="PIRSF" id="PIRSF002905">
    <property type="entry name" value="PSI_A"/>
    <property type="match status" value="1"/>
</dbReference>
<dbReference type="PRINTS" id="PR00257">
    <property type="entry name" value="PHOTSYSPSAAB"/>
</dbReference>
<dbReference type="SUPFAM" id="SSF81558">
    <property type="entry name" value="Photosystem I subunits PsaA/PsaB"/>
    <property type="match status" value="1"/>
</dbReference>
<dbReference type="PROSITE" id="PS00419">
    <property type="entry name" value="PHOTOSYSTEM_I_PSAAB"/>
    <property type="match status" value="1"/>
</dbReference>
<evidence type="ECO:0000255" key="1">
    <source>
        <dbReference type="HAMAP-Rule" id="MF_00458"/>
    </source>
</evidence>
<feature type="chain" id="PRO_0000294210" description="Photosystem I P700 chlorophyll a apoprotein A1">
    <location>
        <begin position="1"/>
        <end position="755"/>
    </location>
</feature>
<feature type="transmembrane region" description="Helical; Name=I" evidence="1">
    <location>
        <begin position="72"/>
        <end position="95"/>
    </location>
</feature>
<feature type="transmembrane region" description="Helical; Name=II" evidence="1">
    <location>
        <begin position="158"/>
        <end position="181"/>
    </location>
</feature>
<feature type="transmembrane region" description="Helical; Name=III" evidence="1">
    <location>
        <begin position="197"/>
        <end position="221"/>
    </location>
</feature>
<feature type="transmembrane region" description="Helical; Name=IV" evidence="1">
    <location>
        <begin position="297"/>
        <end position="315"/>
    </location>
</feature>
<feature type="transmembrane region" description="Helical; Name=V" evidence="1">
    <location>
        <begin position="352"/>
        <end position="375"/>
    </location>
</feature>
<feature type="transmembrane region" description="Helical; Name=VI" evidence="1">
    <location>
        <begin position="391"/>
        <end position="417"/>
    </location>
</feature>
<feature type="transmembrane region" description="Helical; Name=VII" evidence="1">
    <location>
        <begin position="439"/>
        <end position="461"/>
    </location>
</feature>
<feature type="transmembrane region" description="Helical; Name=VIII" evidence="1">
    <location>
        <begin position="536"/>
        <end position="554"/>
    </location>
</feature>
<feature type="transmembrane region" description="Helical; Name=IX" evidence="1">
    <location>
        <begin position="594"/>
        <end position="615"/>
    </location>
</feature>
<feature type="transmembrane region" description="Helical; Name=X" evidence="1">
    <location>
        <begin position="669"/>
        <end position="691"/>
    </location>
</feature>
<feature type="transmembrane region" description="Helical; Name=XI" evidence="1">
    <location>
        <begin position="729"/>
        <end position="749"/>
    </location>
</feature>
<feature type="binding site" evidence="1">
    <location>
        <position position="578"/>
    </location>
    <ligand>
        <name>[4Fe-4S] cluster</name>
        <dbReference type="ChEBI" id="CHEBI:49883"/>
        <note>ligand shared between dimeric partners</note>
    </ligand>
</feature>
<feature type="binding site" evidence="1">
    <location>
        <position position="587"/>
    </location>
    <ligand>
        <name>[4Fe-4S] cluster</name>
        <dbReference type="ChEBI" id="CHEBI:49883"/>
        <note>ligand shared between dimeric partners</note>
    </ligand>
</feature>
<feature type="binding site" description="axial binding residue" evidence="1">
    <location>
        <position position="680"/>
    </location>
    <ligand>
        <name>chlorophyll a'</name>
        <dbReference type="ChEBI" id="CHEBI:189419"/>
        <label>A1</label>
    </ligand>
    <ligandPart>
        <name>Mg</name>
        <dbReference type="ChEBI" id="CHEBI:25107"/>
    </ligandPart>
</feature>
<feature type="binding site" description="axial binding residue" evidence="1">
    <location>
        <position position="688"/>
    </location>
    <ligand>
        <name>chlorophyll a</name>
        <dbReference type="ChEBI" id="CHEBI:58416"/>
        <label>A3</label>
    </ligand>
    <ligandPart>
        <name>Mg</name>
        <dbReference type="ChEBI" id="CHEBI:25107"/>
    </ligandPart>
</feature>
<feature type="binding site" evidence="1">
    <location>
        <position position="696"/>
    </location>
    <ligand>
        <name>chlorophyll a</name>
        <dbReference type="ChEBI" id="CHEBI:58416"/>
        <label>A3</label>
    </ligand>
</feature>
<feature type="binding site" evidence="1">
    <location>
        <position position="697"/>
    </location>
    <ligand>
        <name>phylloquinone</name>
        <dbReference type="ChEBI" id="CHEBI:18067"/>
        <label>A</label>
    </ligand>
</feature>
<proteinExistence type="inferred from homology"/>
<keyword id="KW-0004">4Fe-4S</keyword>
<keyword id="KW-0148">Chlorophyll</keyword>
<keyword id="KW-0157">Chromophore</keyword>
<keyword id="KW-0249">Electron transport</keyword>
<keyword id="KW-0408">Iron</keyword>
<keyword id="KW-0411">Iron-sulfur</keyword>
<keyword id="KW-0460">Magnesium</keyword>
<keyword id="KW-0472">Membrane</keyword>
<keyword id="KW-0479">Metal-binding</keyword>
<keyword id="KW-0560">Oxidoreductase</keyword>
<keyword id="KW-0602">Photosynthesis</keyword>
<keyword id="KW-0603">Photosystem I</keyword>
<keyword id="KW-0793">Thylakoid</keyword>
<keyword id="KW-0812">Transmembrane</keyword>
<keyword id="KW-1133">Transmembrane helix</keyword>
<keyword id="KW-0813">Transport</keyword>
<reference key="1">
    <citation type="journal article" date="2007" name="ISME J.">
        <title>Population level functional diversity in a microbial community revealed by comparative genomic and metagenomic analyses.</title>
        <authorList>
            <person name="Bhaya D."/>
            <person name="Grossman A.R."/>
            <person name="Steunou A.-S."/>
            <person name="Khuri N."/>
            <person name="Cohan F.M."/>
            <person name="Hamamura N."/>
            <person name="Melendrez M.C."/>
            <person name="Bateson M.M."/>
            <person name="Ward D.M."/>
            <person name="Heidelberg J.F."/>
        </authorList>
    </citation>
    <scope>NUCLEOTIDE SEQUENCE [LARGE SCALE GENOMIC DNA]</scope>
    <source>
        <strain>JA-3-3Ab</strain>
    </source>
</reference>
<accession>Q2JRV0</accession>
<comment type="function">
    <text evidence="1">PsaA and PsaB bind P700, the primary electron donor of photosystem I (PSI), as well as the electron acceptors A0, A1 and FX. PSI is a plastocyanin/cytochrome c6-ferredoxin oxidoreductase, converting photonic excitation into a charge separation, which transfers an electron from the donor P700 chlorophyll pair to the spectroscopically characterized acceptors A0, A1, FX, FA and FB in turn. Oxidized P700 is reduced on the lumenal side of the thylakoid membrane by plastocyanin or cytochrome c6.</text>
</comment>
<comment type="catalytic activity">
    <reaction evidence="1">
        <text>reduced [plastocyanin] + hnu + oxidized [2Fe-2S]-[ferredoxin] = oxidized [plastocyanin] + reduced [2Fe-2S]-[ferredoxin]</text>
        <dbReference type="Rhea" id="RHEA:30407"/>
        <dbReference type="Rhea" id="RHEA-COMP:10000"/>
        <dbReference type="Rhea" id="RHEA-COMP:10001"/>
        <dbReference type="Rhea" id="RHEA-COMP:10039"/>
        <dbReference type="Rhea" id="RHEA-COMP:10040"/>
        <dbReference type="ChEBI" id="CHEBI:29036"/>
        <dbReference type="ChEBI" id="CHEBI:30212"/>
        <dbReference type="ChEBI" id="CHEBI:33737"/>
        <dbReference type="ChEBI" id="CHEBI:33738"/>
        <dbReference type="ChEBI" id="CHEBI:49552"/>
        <dbReference type="EC" id="1.97.1.12"/>
    </reaction>
</comment>
<comment type="cofactor">
    <text evidence="1">PSI electron transfer chain: 5 chlorophyll a, 1 chlorophyll a', 2 phylloquinones and 3 4Fe-4S clusters. PSI core antenna: 90 chlorophyll a, 22 carotenoids, 3 phospholipids and 1 galactolipid. P700 is a chlorophyll a/chlorophyll a' dimer, A0 is one or more chlorophyll a, A1 is one or both phylloquinones and FX is a shared 4Fe-4S iron-sulfur center.</text>
</comment>
<comment type="subunit">
    <text evidence="1">The PsaA/B heterodimer binds the P700 chlorophyll special pair and subsequent electron acceptors. PSI consists of a core antenna complex that captures photons, and an electron transfer chain that converts photonic excitation into a charge separation. The cyanobacterial PSI reaction center is composed of one copy each of PsaA,B,C,D,E,F,I,J,K,L,M and X, and forms trimeric complexes.</text>
</comment>
<comment type="subcellular location">
    <subcellularLocation>
        <location evidence="1">Cellular thylakoid membrane</location>
        <topology evidence="1">Multi-pass membrane protein</topology>
    </subcellularLocation>
</comment>
<comment type="similarity">
    <text evidence="1">Belongs to the PsaA/PsaB family.</text>
</comment>
<gene>
    <name evidence="1" type="primary">psaA</name>
    <name type="ordered locus">CYA_2521</name>
</gene>
<protein>
    <recommendedName>
        <fullName evidence="1">Photosystem I P700 chlorophyll a apoprotein A1</fullName>
        <ecNumber evidence="1">1.97.1.12</ecNumber>
    </recommendedName>
    <alternativeName>
        <fullName evidence="1">PsaA</fullName>
    </alternativeName>
</protein>
<sequence>MTTTPKEREPKVKVSVDIDPVPTSFEKWAKPGHFDRSLARGPKTTTWIWNLHALAHDFDSHTSDLEDVSRKIFSAHFGHLAVVFVWLSGMYYHGAQFSNYSAWLADPINIKPSAQVVWPIFGQEILNGDVGGGFEGIRITSGLFHLWRAAGITNEFQLLCTAIGGLVMAGLCLFAGWFHYHKRAPKLEWFQNVESMLNHHLAGLLGLGSLAWAGHQIHVAIPINKMLDAGVPAAQIPLPHEFILKPALMKEMFPSVDWGLFSGVVPFFTLDWGKYAEFLTFKGGLDPQTGALWLTDQAHHHLAIAVLFIVAGHMYRTNWGIGHSIKEILEAHKGPFTGEGHKGLYEVLTSSWHAQLAINLAMVGSLSIIVAQHMYAMNPYPYMGIDYATQISLFTHHMWIGGIFIVGGAAHGAIYMVRDYDPAVNRNNVLDRVIRHRDAIISHLNWVCLFLGFHAFGFYVHNDTMQALGRPQDMFSDTGIQLQPIFAQWIQSLHTKAIASTAPYVGASVSPIFGGDVVAVGGKVSMMPMVLGTADFMVHHIHAMTIHITVLILLKGVLFARSSRLIPDKAKLGFRFPCDGPGRGGTCQVSGWDHVFLGLFWMYNAISIVIFHFSWKMQSDIWGTVNPDGTIEHITGGNFATSAININGWLRDFLWAQSVQVINSYGSELSAYGLLFLGAHFVWAFSLMFLFSGRGYWQELIESIVWAHNKLKVAPAIQPRALSIIQGRAVGVAHYLLGGIVTTWAFFLARFAALG</sequence>
<name>PSAA_SYNJA</name>
<organism>
    <name type="scientific">Synechococcus sp. (strain JA-3-3Ab)</name>
    <name type="common">Cyanobacteria bacterium Yellowstone A-Prime</name>
    <dbReference type="NCBI Taxonomy" id="321327"/>
    <lineage>
        <taxon>Bacteria</taxon>
        <taxon>Bacillati</taxon>
        <taxon>Cyanobacteriota</taxon>
        <taxon>Cyanophyceae</taxon>
        <taxon>Synechococcales</taxon>
        <taxon>Synechococcaceae</taxon>
        <taxon>Synechococcus</taxon>
    </lineage>
</organism>